<evidence type="ECO:0000250" key="1"/>
<evidence type="ECO:0000269" key="2">
    <source>
    </source>
</evidence>
<evidence type="ECO:0000269" key="3">
    <source>
    </source>
</evidence>
<evidence type="ECO:0000305" key="4"/>
<gene>
    <name type="primary">dadX</name>
    <name type="synonym">dadB</name>
    <name type="ordered locus">STM1802</name>
</gene>
<dbReference type="EC" id="5.1.1.1"/>
<dbReference type="EMBL" id="K02119">
    <property type="protein sequence ID" value="AAA27054.1"/>
    <property type="molecule type" value="Genomic_DNA"/>
</dbReference>
<dbReference type="EMBL" id="AE006468">
    <property type="protein sequence ID" value="AAL20717.1"/>
    <property type="molecule type" value="Genomic_DNA"/>
</dbReference>
<dbReference type="PIR" id="A29519">
    <property type="entry name" value="A29519"/>
</dbReference>
<dbReference type="RefSeq" id="NP_460758.1">
    <property type="nucleotide sequence ID" value="NC_003197.2"/>
</dbReference>
<dbReference type="RefSeq" id="WP_000197903.1">
    <property type="nucleotide sequence ID" value="NC_003197.2"/>
</dbReference>
<dbReference type="SMR" id="P06191"/>
<dbReference type="STRING" id="99287.STM1802"/>
<dbReference type="PaxDb" id="99287-STM1802"/>
<dbReference type="GeneID" id="1253321"/>
<dbReference type="KEGG" id="stm:STM1802"/>
<dbReference type="PATRIC" id="fig|99287.12.peg.1901"/>
<dbReference type="HOGENOM" id="CLU_028393_1_0_6"/>
<dbReference type="OMA" id="HMTHFSD"/>
<dbReference type="PhylomeDB" id="P06191"/>
<dbReference type="BioCyc" id="SENT99287:STM1802-MONOMER"/>
<dbReference type="SABIO-RK" id="P06191"/>
<dbReference type="Proteomes" id="UP000001014">
    <property type="component" value="Chromosome"/>
</dbReference>
<dbReference type="GO" id="GO:0005829">
    <property type="term" value="C:cytosol"/>
    <property type="evidence" value="ECO:0000318"/>
    <property type="project" value="GO_Central"/>
</dbReference>
<dbReference type="GO" id="GO:0008784">
    <property type="term" value="F:alanine racemase activity"/>
    <property type="evidence" value="ECO:0000318"/>
    <property type="project" value="GO_Central"/>
</dbReference>
<dbReference type="GO" id="GO:0030170">
    <property type="term" value="F:pyridoxal phosphate binding"/>
    <property type="evidence" value="ECO:0000318"/>
    <property type="project" value="GO_Central"/>
</dbReference>
<dbReference type="GO" id="GO:0030632">
    <property type="term" value="P:D-alanine biosynthetic process"/>
    <property type="evidence" value="ECO:0000318"/>
    <property type="project" value="GO_Central"/>
</dbReference>
<dbReference type="CDD" id="cd06827">
    <property type="entry name" value="PLPDE_III_AR_proteobact"/>
    <property type="match status" value="1"/>
</dbReference>
<dbReference type="FunFam" id="2.40.37.10:FF:000002">
    <property type="entry name" value="Alanine racemase"/>
    <property type="match status" value="1"/>
</dbReference>
<dbReference type="FunFam" id="3.20.20.10:FF:000002">
    <property type="entry name" value="Alanine racemase"/>
    <property type="match status" value="1"/>
</dbReference>
<dbReference type="Gene3D" id="3.20.20.10">
    <property type="entry name" value="Alanine racemase"/>
    <property type="match status" value="1"/>
</dbReference>
<dbReference type="Gene3D" id="2.40.37.10">
    <property type="entry name" value="Lyase, Ornithine Decarboxylase, Chain A, domain 1"/>
    <property type="match status" value="1"/>
</dbReference>
<dbReference type="HAMAP" id="MF_01201">
    <property type="entry name" value="Ala_racemase"/>
    <property type="match status" value="1"/>
</dbReference>
<dbReference type="InterPro" id="IPR000821">
    <property type="entry name" value="Ala_racemase"/>
</dbReference>
<dbReference type="InterPro" id="IPR009006">
    <property type="entry name" value="Ala_racemase/Decarboxylase_C"/>
</dbReference>
<dbReference type="InterPro" id="IPR011079">
    <property type="entry name" value="Ala_racemase_C"/>
</dbReference>
<dbReference type="InterPro" id="IPR001608">
    <property type="entry name" value="Ala_racemase_N"/>
</dbReference>
<dbReference type="InterPro" id="IPR020622">
    <property type="entry name" value="Ala_racemase_pyridoxalP-BS"/>
</dbReference>
<dbReference type="InterPro" id="IPR029066">
    <property type="entry name" value="PLP-binding_barrel"/>
</dbReference>
<dbReference type="NCBIfam" id="TIGR00492">
    <property type="entry name" value="alr"/>
    <property type="match status" value="1"/>
</dbReference>
<dbReference type="NCBIfam" id="NF002970">
    <property type="entry name" value="PRK03646.1"/>
    <property type="match status" value="1"/>
</dbReference>
<dbReference type="PANTHER" id="PTHR30511">
    <property type="entry name" value="ALANINE RACEMASE"/>
    <property type="match status" value="1"/>
</dbReference>
<dbReference type="PANTHER" id="PTHR30511:SF0">
    <property type="entry name" value="ALANINE RACEMASE, CATABOLIC-RELATED"/>
    <property type="match status" value="1"/>
</dbReference>
<dbReference type="Pfam" id="PF00842">
    <property type="entry name" value="Ala_racemase_C"/>
    <property type="match status" value="1"/>
</dbReference>
<dbReference type="Pfam" id="PF01168">
    <property type="entry name" value="Ala_racemase_N"/>
    <property type="match status" value="1"/>
</dbReference>
<dbReference type="PRINTS" id="PR00992">
    <property type="entry name" value="ALARACEMASE"/>
</dbReference>
<dbReference type="SMART" id="SM01005">
    <property type="entry name" value="Ala_racemase_C"/>
    <property type="match status" value="1"/>
</dbReference>
<dbReference type="SUPFAM" id="SSF50621">
    <property type="entry name" value="Alanine racemase C-terminal domain-like"/>
    <property type="match status" value="1"/>
</dbReference>
<dbReference type="SUPFAM" id="SSF51419">
    <property type="entry name" value="PLP-binding barrel"/>
    <property type="match status" value="1"/>
</dbReference>
<dbReference type="PROSITE" id="PS00395">
    <property type="entry name" value="ALANINE_RACEMASE"/>
    <property type="match status" value="1"/>
</dbReference>
<organism>
    <name type="scientific">Salmonella typhimurium (strain LT2 / SGSC1412 / ATCC 700720)</name>
    <dbReference type="NCBI Taxonomy" id="99287"/>
    <lineage>
        <taxon>Bacteria</taxon>
        <taxon>Pseudomonadati</taxon>
        <taxon>Pseudomonadota</taxon>
        <taxon>Gammaproteobacteria</taxon>
        <taxon>Enterobacterales</taxon>
        <taxon>Enterobacteriaceae</taxon>
        <taxon>Salmonella</taxon>
    </lineage>
</organism>
<feature type="chain" id="PRO_0000114561" description="Alanine racemase, catabolic">
    <location>
        <begin position="1"/>
        <end position="356"/>
    </location>
</feature>
<feature type="active site" description="Proton acceptor; specific for D-alanine" evidence="1">
    <location>
        <position position="35"/>
    </location>
</feature>
<feature type="active site" description="Proton acceptor; specific for L-alanine" evidence="1">
    <location>
        <position position="253"/>
    </location>
</feature>
<feature type="binding site" evidence="1">
    <location>
        <position position="130"/>
    </location>
    <ligand>
        <name>substrate</name>
    </ligand>
</feature>
<feature type="binding site" evidence="1">
    <location>
        <position position="301"/>
    </location>
    <ligand>
        <name>substrate</name>
    </ligand>
</feature>
<feature type="modified residue" description="N6-(pyridoxal phosphate)lysine">
    <location>
        <position position="35"/>
    </location>
</feature>
<proteinExistence type="evidence at protein level"/>
<comment type="function">
    <text evidence="2">Isomerizes L-alanine to D-alanine which is then oxidized to pyruvate by DadA.</text>
</comment>
<comment type="catalytic activity">
    <reaction evidence="2">
        <text>L-alanine = D-alanine</text>
        <dbReference type="Rhea" id="RHEA:20249"/>
        <dbReference type="ChEBI" id="CHEBI:57416"/>
        <dbReference type="ChEBI" id="CHEBI:57972"/>
        <dbReference type="EC" id="5.1.1.1"/>
    </reaction>
</comment>
<comment type="cofactor">
    <cofactor evidence="2 3">
        <name>pyridoxal 5'-phosphate</name>
        <dbReference type="ChEBI" id="CHEBI:597326"/>
    </cofactor>
</comment>
<comment type="activity regulation">
    <text evidence="3">Inactivated by D- and L-beta-fluoroalanine, D- and L-beta-chloroalanine, and O-acetyl-D-serine.</text>
</comment>
<comment type="biophysicochemical properties">
    <kinetics>
        <KM evidence="2">2.1 mM for D-alanine</KM>
        <KM evidence="2">8.2 mM for L-alanine</KM>
    </kinetics>
</comment>
<comment type="subunit">
    <text evidence="2">Monomer.</text>
</comment>
<comment type="similarity">
    <text evidence="4">Belongs to the alanine racemase family.</text>
</comment>
<keyword id="KW-0903">Direct protein sequencing</keyword>
<keyword id="KW-0413">Isomerase</keyword>
<keyword id="KW-0663">Pyridoxal phosphate</keyword>
<keyword id="KW-1185">Reference proteome</keyword>
<name>ALR2_SALTY</name>
<protein>
    <recommendedName>
        <fullName>Alanine racemase, catabolic</fullName>
        <ecNumber>5.1.1.1</ecNumber>
    </recommendedName>
</protein>
<reference key="1">
    <citation type="journal article" date="1984" name="Biochemistry">
        <title>Catabolic alanine racemase from Salmonella typhimurium: DNA sequence, enzyme purification, and characterization.</title>
        <authorList>
            <person name="Wasserman S.A."/>
            <person name="Daub E."/>
            <person name="Grisafi P."/>
            <person name="Botstein D."/>
            <person name="Walsh C.T."/>
        </authorList>
    </citation>
    <scope>NUCLEOTIDE SEQUENCE [GENOMIC DNA]</scope>
    <scope>PROTEIN SEQUENCE OF 1-25</scope>
    <scope>FUNCTION</scope>
    <scope>CATALYTIC ACTIVITY</scope>
    <scope>COFACTOR</scope>
    <scope>BIOPHYSICOCHEMICAL PROPERTIES</scope>
    <scope>SUBUNIT</scope>
</reference>
<reference key="2">
    <citation type="journal article" date="2001" name="Nature">
        <title>Complete genome sequence of Salmonella enterica serovar Typhimurium LT2.</title>
        <authorList>
            <person name="McClelland M."/>
            <person name="Sanderson K.E."/>
            <person name="Spieth J."/>
            <person name="Clifton S.W."/>
            <person name="Latreille P."/>
            <person name="Courtney L."/>
            <person name="Porwollik S."/>
            <person name="Ali J."/>
            <person name="Dante M."/>
            <person name="Du F."/>
            <person name="Hou S."/>
            <person name="Layman D."/>
            <person name="Leonard S."/>
            <person name="Nguyen C."/>
            <person name="Scott K."/>
            <person name="Holmes A."/>
            <person name="Grewal N."/>
            <person name="Mulvaney E."/>
            <person name="Ryan E."/>
            <person name="Sun H."/>
            <person name="Florea L."/>
            <person name="Miller W."/>
            <person name="Stoneking T."/>
            <person name="Nhan M."/>
            <person name="Waterston R."/>
            <person name="Wilson R.K."/>
        </authorList>
    </citation>
    <scope>NUCLEOTIDE SEQUENCE [LARGE SCALE GENOMIC DNA]</scope>
    <source>
        <strain>LT2 / SGSC1412 / ATCC 700720</strain>
    </source>
</reference>
<reference key="3">
    <citation type="journal article" date="1984" name="Biochemistry">
        <title>Inactivation of the dadB Salmonella typhimurium alanine racemase by D and L isomers of beta-substituted alanines: kinetics, stoichiometry, active site peptide sequencing, and reaction mechanism.</title>
        <authorList>
            <person name="Badet B."/>
            <person name="Roise D."/>
            <person name="Walsh C.T."/>
        </authorList>
    </citation>
    <scope>PROTEIN SEQUENCE OF 30-44</scope>
    <scope>COFACTOR</scope>
    <scope>ACTIVITY REGULATION</scope>
</reference>
<sequence>MTRPIQASLDLQVMKQNLAIVRRAAPEARVWSVVKANAYGHGIERVWSALGATDGFAMLNLEEAITLRERGWKGPILMLEGFFHAQDLEAYDTYRLTTCIHSNWQLKALQNARLNAPLDIYVKVNSGMNRLGFQPERAQTVWQQLRAMRNVGEMTLMSHFAQADHPEGIGEAMRRIALATEGLQCAYSLSNSAATLWHPQAHYDWVRPGIILYGASPSGQWRDIADTGLKPVMTLSSEIIGVQTLSAGERVGYGGGYSVTQEQRIGIVAAGYADGYPRHAPTGTPVLVDGIRTRTVGTVSMDMLAVDLTPCPQAGIGTPVELWGKEIKVDDVASAAGTLGYELLCAVAPRVPFVTT</sequence>
<accession>P06191</accession>